<organism>
    <name type="scientific">Burkholderia multivorans (strain ATCC 17616 / 249)</name>
    <dbReference type="NCBI Taxonomy" id="395019"/>
    <lineage>
        <taxon>Bacteria</taxon>
        <taxon>Pseudomonadati</taxon>
        <taxon>Pseudomonadota</taxon>
        <taxon>Betaproteobacteria</taxon>
        <taxon>Burkholderiales</taxon>
        <taxon>Burkholderiaceae</taxon>
        <taxon>Burkholderia</taxon>
        <taxon>Burkholderia cepacia complex</taxon>
    </lineage>
</organism>
<feature type="chain" id="PRO_0000436380" description="Peptide deformylase 1">
    <location>
        <begin position="1"/>
        <end position="181"/>
    </location>
</feature>
<feature type="active site" evidence="1">
    <location>
        <position position="149"/>
    </location>
</feature>
<feature type="binding site" evidence="1 3">
    <location>
        <position position="106"/>
    </location>
    <ligand>
        <name>Fe cation</name>
        <dbReference type="ChEBI" id="CHEBI:24875"/>
    </ligand>
</feature>
<feature type="binding site" evidence="1 3">
    <location>
        <position position="148"/>
    </location>
    <ligand>
        <name>Fe cation</name>
        <dbReference type="ChEBI" id="CHEBI:24875"/>
    </ligand>
</feature>
<feature type="binding site" evidence="1 3">
    <location>
        <position position="152"/>
    </location>
    <ligand>
        <name>Fe cation</name>
        <dbReference type="ChEBI" id="CHEBI:24875"/>
    </ligand>
</feature>
<feature type="helix" evidence="5">
    <location>
        <begin position="26"/>
        <end position="29"/>
    </location>
</feature>
<feature type="helix" evidence="5">
    <location>
        <begin position="40"/>
        <end position="55"/>
    </location>
</feature>
<feature type="strand" evidence="5">
    <location>
        <begin position="59"/>
        <end position="62"/>
    </location>
</feature>
<feature type="helix" evidence="5">
    <location>
        <begin position="63"/>
        <end position="66"/>
    </location>
</feature>
<feature type="strand" evidence="5">
    <location>
        <begin position="70"/>
        <end position="75"/>
    </location>
</feature>
<feature type="strand" evidence="5">
    <location>
        <begin position="79"/>
        <end position="81"/>
    </location>
</feature>
<feature type="strand" evidence="5">
    <location>
        <begin position="85"/>
        <end position="95"/>
    </location>
</feature>
<feature type="strand" evidence="5">
    <location>
        <begin position="99"/>
        <end position="104"/>
    </location>
</feature>
<feature type="strand" evidence="5">
    <location>
        <begin position="114"/>
        <end position="127"/>
    </location>
</feature>
<feature type="strand" evidence="5">
    <location>
        <begin position="133"/>
        <end position="139"/>
    </location>
</feature>
<feature type="helix" evidence="5">
    <location>
        <begin position="140"/>
        <end position="153"/>
    </location>
</feature>
<feature type="helix" evidence="5">
    <location>
        <begin position="158"/>
        <end position="161"/>
    </location>
</feature>
<feature type="helix" evidence="5">
    <location>
        <begin position="164"/>
        <end position="177"/>
    </location>
</feature>
<accession>A0A0H3KB98</accession>
<dbReference type="EC" id="3.5.1.88" evidence="1"/>
<dbReference type="EMBL" id="AP009385">
    <property type="protein sequence ID" value="BAG42085.1"/>
    <property type="status" value="ALT_INIT"/>
    <property type="molecule type" value="Genomic_DNA"/>
</dbReference>
<dbReference type="PDB" id="5J46">
    <property type="method" value="X-ray"/>
    <property type="resolution" value="1.95 A"/>
    <property type="chains" value="A=15-181"/>
</dbReference>
<dbReference type="PDBsum" id="5J46"/>
<dbReference type="SMR" id="A0A0H3KB98"/>
<dbReference type="STRING" id="395019.BMULJ_00106"/>
<dbReference type="KEGG" id="bmj:BMULJ_00106"/>
<dbReference type="KEGG" id="bmu:Bmul_3124"/>
<dbReference type="eggNOG" id="COG0242">
    <property type="taxonomic scope" value="Bacteria"/>
</dbReference>
<dbReference type="HOGENOM" id="CLU_061901_2_1_4"/>
<dbReference type="Proteomes" id="UP000008815">
    <property type="component" value="Chromosome 1"/>
</dbReference>
<dbReference type="GO" id="GO:0046872">
    <property type="term" value="F:metal ion binding"/>
    <property type="evidence" value="ECO:0007669"/>
    <property type="project" value="UniProtKB-KW"/>
</dbReference>
<dbReference type="GO" id="GO:0042586">
    <property type="term" value="F:peptide deformylase activity"/>
    <property type="evidence" value="ECO:0007669"/>
    <property type="project" value="UniProtKB-UniRule"/>
</dbReference>
<dbReference type="GO" id="GO:0043686">
    <property type="term" value="P:co-translational protein modification"/>
    <property type="evidence" value="ECO:0007669"/>
    <property type="project" value="TreeGrafter"/>
</dbReference>
<dbReference type="GO" id="GO:0006412">
    <property type="term" value="P:translation"/>
    <property type="evidence" value="ECO:0007669"/>
    <property type="project" value="UniProtKB-UniRule"/>
</dbReference>
<dbReference type="CDD" id="cd00487">
    <property type="entry name" value="Pep_deformylase"/>
    <property type="match status" value="1"/>
</dbReference>
<dbReference type="FunFam" id="3.90.45.10:FF:000001">
    <property type="entry name" value="Peptide deformylase"/>
    <property type="match status" value="1"/>
</dbReference>
<dbReference type="Gene3D" id="3.90.45.10">
    <property type="entry name" value="Peptide deformylase"/>
    <property type="match status" value="1"/>
</dbReference>
<dbReference type="HAMAP" id="MF_00163">
    <property type="entry name" value="Pep_deformylase"/>
    <property type="match status" value="1"/>
</dbReference>
<dbReference type="InterPro" id="IPR023635">
    <property type="entry name" value="Peptide_deformylase"/>
</dbReference>
<dbReference type="InterPro" id="IPR036821">
    <property type="entry name" value="Peptide_deformylase_sf"/>
</dbReference>
<dbReference type="NCBIfam" id="TIGR00079">
    <property type="entry name" value="pept_deformyl"/>
    <property type="match status" value="1"/>
</dbReference>
<dbReference type="NCBIfam" id="NF001159">
    <property type="entry name" value="PRK00150.1-3"/>
    <property type="match status" value="1"/>
</dbReference>
<dbReference type="PANTHER" id="PTHR10458">
    <property type="entry name" value="PEPTIDE DEFORMYLASE"/>
    <property type="match status" value="1"/>
</dbReference>
<dbReference type="PANTHER" id="PTHR10458:SF22">
    <property type="entry name" value="PEPTIDE DEFORMYLASE"/>
    <property type="match status" value="1"/>
</dbReference>
<dbReference type="Pfam" id="PF01327">
    <property type="entry name" value="Pep_deformylase"/>
    <property type="match status" value="1"/>
</dbReference>
<dbReference type="PIRSF" id="PIRSF004749">
    <property type="entry name" value="Pep_def"/>
    <property type="match status" value="1"/>
</dbReference>
<dbReference type="PRINTS" id="PR01576">
    <property type="entry name" value="PDEFORMYLASE"/>
</dbReference>
<dbReference type="SUPFAM" id="SSF56420">
    <property type="entry name" value="Peptide deformylase"/>
    <property type="match status" value="1"/>
</dbReference>
<evidence type="ECO:0000255" key="1">
    <source>
        <dbReference type="HAMAP-Rule" id="MF_00163"/>
    </source>
</evidence>
<evidence type="ECO:0000305" key="2"/>
<evidence type="ECO:0000305" key="3">
    <source ref="2"/>
</evidence>
<evidence type="ECO:0007744" key="4">
    <source>
        <dbReference type="PDB" id="5J46"/>
    </source>
</evidence>
<evidence type="ECO:0007829" key="5">
    <source>
        <dbReference type="PDB" id="5J46"/>
    </source>
</evidence>
<comment type="function">
    <text evidence="1">Removes the formyl group from the N-terminal Met of newly synthesized proteins. Requires at least a dipeptide for an efficient rate of reaction. N-terminal L-methionine is a prerequisite for activity but the enzyme has broad specificity at other positions.</text>
</comment>
<comment type="catalytic activity">
    <reaction evidence="1">
        <text>N-terminal N-formyl-L-methionyl-[peptide] + H2O = N-terminal L-methionyl-[peptide] + formate</text>
        <dbReference type="Rhea" id="RHEA:24420"/>
        <dbReference type="Rhea" id="RHEA-COMP:10639"/>
        <dbReference type="Rhea" id="RHEA-COMP:10640"/>
        <dbReference type="ChEBI" id="CHEBI:15377"/>
        <dbReference type="ChEBI" id="CHEBI:15740"/>
        <dbReference type="ChEBI" id="CHEBI:49298"/>
        <dbReference type="ChEBI" id="CHEBI:64731"/>
        <dbReference type="EC" id="3.5.1.88"/>
    </reaction>
</comment>
<comment type="cofactor">
    <cofactor evidence="1 3">
        <name>Fe(2+)</name>
        <dbReference type="ChEBI" id="CHEBI:29033"/>
    </cofactor>
    <text evidence="1">Binds 1 Fe(2+) ion.</text>
</comment>
<comment type="miscellaneous">
    <text evidence="3">The submitted crystal structure binds Zn(+) rather than Fe(2+).</text>
</comment>
<comment type="similarity">
    <text evidence="1">Belongs to the polypeptide deformylase family.</text>
</comment>
<comment type="caution">
    <text evidence="2">It is uncertain whether Met-1 or Met-15 is the initiator.</text>
</comment>
<comment type="sequence caution" evidence="2">
    <conflict type="erroneous initiation">
        <sequence resource="EMBL-CDS" id="BAG42085"/>
    </conflict>
    <text>Truncated N-terminus.</text>
</comment>
<keyword id="KW-0002">3D-structure</keyword>
<keyword id="KW-0378">Hydrolase</keyword>
<keyword id="KW-0408">Iron</keyword>
<keyword id="KW-0479">Metal-binding</keyword>
<keyword id="KW-0648">Protein biosynthesis</keyword>
<keyword id="KW-1185">Reference proteome</keyword>
<gene>
    <name evidence="1" type="primary">def1</name>
    <name type="ordered locus">BMULJ_00106</name>
</gene>
<sequence length="181" mass="20781">MANAAHRFTEYRKTMALLNILHYPDKRLHKVAKPVDKVDDRIRKLVADMAETMYAAPGIGLAATQVDVHERVIVIDVSEDKNELRAFINPEIIWSSDGKQVYEEGCLSVPGIYDEVERPDRVRVRALNEQGETFELDCEGLLAVCIQHEMDHLMGRVFVEYLSPLKQSRIKTKMKKLERAM</sequence>
<protein>
    <recommendedName>
        <fullName evidence="1">Peptide deformylase 1</fullName>
        <shortName evidence="1">PDF</shortName>
        <ecNumber evidence="1">3.5.1.88</ecNumber>
    </recommendedName>
    <alternativeName>
        <fullName evidence="1">Polypeptide deformylase 1</fullName>
    </alternativeName>
</protein>
<proteinExistence type="evidence at protein level"/>
<name>DEF1_BURM1</name>
<reference key="1">
    <citation type="submission" date="2007-04" db="EMBL/GenBank/DDBJ databases">
        <title>Complete genome sequence of Burkholderia multivorans ATCC 17616.</title>
        <authorList>
            <person name="Ohtsubo Y."/>
            <person name="Yamashita A."/>
            <person name="Kurokawa K."/>
            <person name="Takami H."/>
            <person name="Yuhara S."/>
            <person name="Nishiyama E."/>
            <person name="Endo R."/>
            <person name="Miyazaki R."/>
            <person name="Ono A."/>
            <person name="Yano K."/>
            <person name="Ito M."/>
            <person name="Sota M."/>
            <person name="Yuji N."/>
            <person name="Hattori M."/>
            <person name="Tsuda M."/>
        </authorList>
    </citation>
    <scope>NUCLEOTIDE SEQUENCE [LARGE SCALE GENOMIC DNA]</scope>
    <source>
        <strain>ATCC 17616 / 249</strain>
    </source>
</reference>
<reference evidence="4" key="2">
    <citation type="submission" date="2016-03" db="PDB data bank">
        <title>Crystal structure of a peptide deformylase from Burkholderia multivorans.</title>
        <authorList>
            <person name="Potts K.T."/>
            <person name="Abendroth J."/>
            <person name="Lorimer D.D."/>
            <person name="Edwards T.E."/>
        </authorList>
    </citation>
    <scope>X-RAY CRYSTALLOGRAPHY (1.95 ANGSTROMS) OF 15-181</scope>
    <scope>COFACTOR</scope>
    <source>
        <strain>ATCC 17616 / 249</strain>
    </source>
</reference>